<feature type="signal peptide" evidence="1">
    <location>
        <begin position="1"/>
        <end position="21"/>
    </location>
</feature>
<feature type="chain" id="PRO_5009344268" description="Leucine-rich repeat protein 1" evidence="1">
    <location>
        <begin position="22"/>
        <end position="213"/>
    </location>
</feature>
<feature type="repeat" description="LRR 1" evidence="1">
    <location>
        <begin position="90"/>
        <end position="113"/>
    </location>
</feature>
<feature type="repeat" description="LRR 2" evidence="1">
    <location>
        <begin position="115"/>
        <end position="137"/>
    </location>
</feature>
<feature type="repeat" description="LRR 3" evidence="1">
    <location>
        <begin position="138"/>
        <end position="161"/>
    </location>
</feature>
<feature type="repeat" description="LRR 4" evidence="1">
    <location>
        <begin position="163"/>
        <end position="186"/>
    </location>
</feature>
<reference evidence="5" key="1">
    <citation type="submission" date="2001-03" db="EMBL/GenBank/DDBJ databases">
        <title>Molecular cloning of the gene encoding for leucine rich repeat protein.</title>
        <authorList>
            <person name="Park M."/>
            <person name="Lee H."/>
            <person name="Moon E."/>
            <person name="Hwang D.-J."/>
        </authorList>
    </citation>
    <scope>NUCLEOTIDE SEQUENCE [MRNA]</scope>
</reference>
<reference key="2">
    <citation type="journal article" date="2009" name="Plant Cell Environ.">
        <title>A novel simple extracellular leucine-rich repeat (eLRR) domain protein from rice (OsLRR1) enters the endosomal pathway and interacts with the hypersensitive-induced reaction protein 1 (OsHIR1).</title>
        <authorList>
            <person name="Zhou L."/>
            <person name="Cheung M.Y."/>
            <person name="Zhang Q."/>
            <person name="Lei C.L."/>
            <person name="Zhang S.H."/>
            <person name="Sun S.S."/>
            <person name="Lam H.M."/>
        </authorList>
    </citation>
    <scope>NUCLEOTIDE SEQUENCE [MRNA]</scope>
    <scope>FUNCTION</scope>
    <scope>INDUCTION BY PATHOGEN AND WOUNDING</scope>
    <scope>SUBCELLULAR LOCATION</scope>
    <scope>INTERACTION WITH HIR1</scope>
</reference>
<reference key="3">
    <citation type="journal article" date="2002" name="Nature">
        <title>The genome sequence and structure of rice chromosome 1.</title>
        <authorList>
            <person name="Sasaki T."/>
            <person name="Matsumoto T."/>
            <person name="Yamamoto K."/>
            <person name="Sakata K."/>
            <person name="Baba T."/>
            <person name="Katayose Y."/>
            <person name="Wu J."/>
            <person name="Niimura Y."/>
            <person name="Cheng Z."/>
            <person name="Nagamura Y."/>
            <person name="Antonio B.A."/>
            <person name="Kanamori H."/>
            <person name="Hosokawa S."/>
            <person name="Masukawa M."/>
            <person name="Arikawa K."/>
            <person name="Chiden Y."/>
            <person name="Hayashi M."/>
            <person name="Okamoto M."/>
            <person name="Ando T."/>
            <person name="Aoki H."/>
            <person name="Arita K."/>
            <person name="Hamada M."/>
            <person name="Harada C."/>
            <person name="Hijishita S."/>
            <person name="Honda M."/>
            <person name="Ichikawa Y."/>
            <person name="Idonuma A."/>
            <person name="Iijima M."/>
            <person name="Ikeda M."/>
            <person name="Ikeno M."/>
            <person name="Ito S."/>
            <person name="Ito T."/>
            <person name="Ito Y."/>
            <person name="Ito Y."/>
            <person name="Iwabuchi A."/>
            <person name="Kamiya K."/>
            <person name="Karasawa W."/>
            <person name="Katagiri S."/>
            <person name="Kikuta A."/>
            <person name="Kobayashi N."/>
            <person name="Kono I."/>
            <person name="Machita K."/>
            <person name="Maehara T."/>
            <person name="Mizuno H."/>
            <person name="Mizubayashi T."/>
            <person name="Mukai Y."/>
            <person name="Nagasaki H."/>
            <person name="Nakashima M."/>
            <person name="Nakama Y."/>
            <person name="Nakamichi Y."/>
            <person name="Nakamura M."/>
            <person name="Namiki N."/>
            <person name="Negishi M."/>
            <person name="Ohta I."/>
            <person name="Ono N."/>
            <person name="Saji S."/>
            <person name="Sakai K."/>
            <person name="Shibata M."/>
            <person name="Shimokawa T."/>
            <person name="Shomura A."/>
            <person name="Song J."/>
            <person name="Takazaki Y."/>
            <person name="Terasawa K."/>
            <person name="Tsuji K."/>
            <person name="Waki K."/>
            <person name="Yamagata H."/>
            <person name="Yamane H."/>
            <person name="Yoshiki S."/>
            <person name="Yoshihara R."/>
            <person name="Yukawa K."/>
            <person name="Zhong H."/>
            <person name="Iwama H."/>
            <person name="Endo T."/>
            <person name="Ito H."/>
            <person name="Hahn J.H."/>
            <person name="Kim H.-I."/>
            <person name="Eun M.-Y."/>
            <person name="Yano M."/>
            <person name="Jiang J."/>
            <person name="Gojobori T."/>
        </authorList>
    </citation>
    <scope>NUCLEOTIDE SEQUENCE [LARGE SCALE GENOMIC DNA]</scope>
    <source>
        <strain>cv. Nipponbare</strain>
    </source>
</reference>
<reference key="4">
    <citation type="journal article" date="2005" name="Nature">
        <title>The map-based sequence of the rice genome.</title>
        <authorList>
            <consortium name="International rice genome sequencing project (IRGSP)"/>
        </authorList>
    </citation>
    <scope>NUCLEOTIDE SEQUENCE [LARGE SCALE GENOMIC DNA]</scope>
    <source>
        <strain>cv. Nipponbare</strain>
    </source>
</reference>
<reference key="5">
    <citation type="journal article" date="2008" name="Nucleic Acids Res.">
        <title>The rice annotation project database (RAP-DB): 2008 update.</title>
        <authorList>
            <consortium name="The rice annotation project (RAP)"/>
        </authorList>
    </citation>
    <scope>GENOME REANNOTATION</scope>
    <source>
        <strain>cv. Nipponbare</strain>
    </source>
</reference>
<reference key="6">
    <citation type="journal article" date="2013" name="Rice">
        <title>Improvement of the Oryza sativa Nipponbare reference genome using next generation sequence and optical map data.</title>
        <authorList>
            <person name="Kawahara Y."/>
            <person name="de la Bastide M."/>
            <person name="Hamilton J.P."/>
            <person name="Kanamori H."/>
            <person name="McCombie W.R."/>
            <person name="Ouyang S."/>
            <person name="Schwartz D.C."/>
            <person name="Tanaka T."/>
            <person name="Wu J."/>
            <person name="Zhou S."/>
            <person name="Childs K.L."/>
            <person name="Davidson R.M."/>
            <person name="Lin H."/>
            <person name="Quesada-Ocampo L."/>
            <person name="Vaillancourt B."/>
            <person name="Sakai H."/>
            <person name="Lee S.S."/>
            <person name="Kim J."/>
            <person name="Numa H."/>
            <person name="Itoh T."/>
            <person name="Buell C.R."/>
            <person name="Matsumoto T."/>
        </authorList>
    </citation>
    <scope>GENOME REANNOTATION</scope>
    <source>
        <strain>cv. Nipponbare</strain>
    </source>
</reference>
<reference key="7">
    <citation type="journal article" date="2003" name="Science">
        <title>Collection, mapping, and annotation of over 28,000 cDNA clones from japonica rice.</title>
        <authorList>
            <consortium name="The rice full-length cDNA consortium"/>
        </authorList>
    </citation>
    <scope>NUCLEOTIDE SEQUENCE [LARGE SCALE MRNA]</scope>
    <source>
        <strain>cv. Nipponbare</strain>
    </source>
</reference>
<proteinExistence type="evidence at protein level"/>
<accession>Q5VQP7</accession>
<accession>Q84JK7</accession>
<evidence type="ECO:0000255" key="1"/>
<evidence type="ECO:0000269" key="2">
    <source>
    </source>
</evidence>
<evidence type="ECO:0000303" key="3">
    <source>
    </source>
</evidence>
<evidence type="ECO:0000305" key="4"/>
<evidence type="ECO:0000312" key="5">
    <source>
        <dbReference type="EMBL" id="AAO85403.1"/>
    </source>
</evidence>
<evidence type="ECO:0000312" key="6">
    <source>
        <dbReference type="EMBL" id="BAD68228.1"/>
    </source>
</evidence>
<evidence type="ECO:0000312" key="7">
    <source>
        <dbReference type="EMBL" id="BAF06492.1"/>
    </source>
</evidence>
<evidence type="ECO:0000312" key="8">
    <source>
        <dbReference type="EMBL" id="BAS74858.1"/>
    </source>
</evidence>
<dbReference type="EMBL" id="AF364178">
    <property type="protein sequence ID" value="AAO85403.1"/>
    <property type="molecule type" value="mRNA"/>
</dbReference>
<dbReference type="EMBL" id="AF364177">
    <property type="protein sequence ID" value="AAO85402.1"/>
    <property type="molecule type" value="mRNA"/>
</dbReference>
<dbReference type="EMBL" id="AP003260">
    <property type="protein sequence ID" value="BAD68228.1"/>
    <property type="molecule type" value="Genomic_DNA"/>
</dbReference>
<dbReference type="EMBL" id="AP008207">
    <property type="protein sequence ID" value="BAF06492.1"/>
    <property type="molecule type" value="Genomic_DNA"/>
</dbReference>
<dbReference type="EMBL" id="AP014957">
    <property type="protein sequence ID" value="BAS74858.1"/>
    <property type="molecule type" value="Genomic_DNA"/>
</dbReference>
<dbReference type="EMBL" id="AK070798">
    <property type="protein sequence ID" value="BAG92148.1"/>
    <property type="molecule type" value="mRNA"/>
</dbReference>
<dbReference type="EMBL" id="AK099315">
    <property type="protein sequence ID" value="BAG94061.1"/>
    <property type="molecule type" value="mRNA"/>
</dbReference>
<dbReference type="RefSeq" id="XP_015648898.1">
    <property type="nucleotide sequence ID" value="XM_015793412.1"/>
</dbReference>
<dbReference type="SMR" id="Q5VQP7"/>
<dbReference type="FunCoup" id="Q5VQP7">
    <property type="interactions" value="2116"/>
</dbReference>
<dbReference type="STRING" id="39947.Q5VQP7"/>
<dbReference type="PaxDb" id="39947-Q5VQP7"/>
<dbReference type="EnsemblPlants" id="Os01t0809300-01">
    <property type="protein sequence ID" value="Os01t0809300-01"/>
    <property type="gene ID" value="Os01g0809300"/>
</dbReference>
<dbReference type="Gramene" id="Os01t0809300-01">
    <property type="protein sequence ID" value="Os01t0809300-01"/>
    <property type="gene ID" value="Os01g0809300"/>
</dbReference>
<dbReference type="KEGG" id="dosa:Os01g0809300"/>
<dbReference type="eggNOG" id="KOG0619">
    <property type="taxonomic scope" value="Eukaryota"/>
</dbReference>
<dbReference type="HOGENOM" id="CLU_000288_18_9_1"/>
<dbReference type="InParanoid" id="Q5VQP7"/>
<dbReference type="OMA" id="IQFTHAN"/>
<dbReference type="OrthoDB" id="1394818at2759"/>
<dbReference type="Proteomes" id="UP000000763">
    <property type="component" value="Chromosome 1"/>
</dbReference>
<dbReference type="Proteomes" id="UP000059680">
    <property type="component" value="Chromosome 1"/>
</dbReference>
<dbReference type="GO" id="GO:0031901">
    <property type="term" value="C:early endosome membrane"/>
    <property type="evidence" value="ECO:0007669"/>
    <property type="project" value="UniProtKB-SubCell"/>
</dbReference>
<dbReference type="GO" id="GO:0031902">
    <property type="term" value="C:late endosome membrane"/>
    <property type="evidence" value="ECO:0007669"/>
    <property type="project" value="UniProtKB-SubCell"/>
</dbReference>
<dbReference type="GO" id="GO:0005886">
    <property type="term" value="C:plasma membrane"/>
    <property type="evidence" value="ECO:0007669"/>
    <property type="project" value="UniProtKB-SubCell"/>
</dbReference>
<dbReference type="GO" id="GO:0006952">
    <property type="term" value="P:defense response"/>
    <property type="evidence" value="ECO:0007669"/>
    <property type="project" value="UniProtKB-KW"/>
</dbReference>
<dbReference type="FunFam" id="3.80.10.10:FF:000024">
    <property type="entry name" value="Somatic embryogenesis receptor kinase 1"/>
    <property type="match status" value="1"/>
</dbReference>
<dbReference type="Gene3D" id="3.80.10.10">
    <property type="entry name" value="Ribonuclease Inhibitor"/>
    <property type="match status" value="1"/>
</dbReference>
<dbReference type="InterPro" id="IPR032675">
    <property type="entry name" value="LRR_dom_sf"/>
</dbReference>
<dbReference type="InterPro" id="IPR013210">
    <property type="entry name" value="LRR_N_plant-typ"/>
</dbReference>
<dbReference type="InterPro" id="IPR055414">
    <property type="entry name" value="LRR_R13L4/SHOC2-like"/>
</dbReference>
<dbReference type="PANTHER" id="PTHR47988">
    <property type="entry name" value="SOMATIC EMBRYOGENESIS RECEPTOR KINASE 1"/>
    <property type="match status" value="1"/>
</dbReference>
<dbReference type="Pfam" id="PF23598">
    <property type="entry name" value="LRR_14"/>
    <property type="match status" value="1"/>
</dbReference>
<dbReference type="Pfam" id="PF08263">
    <property type="entry name" value="LRRNT_2"/>
    <property type="match status" value="1"/>
</dbReference>
<dbReference type="SUPFAM" id="SSF52058">
    <property type="entry name" value="L domain-like"/>
    <property type="match status" value="1"/>
</dbReference>
<sequence length="213" mass="22779">MGAGALGVVAMVAAAVVVAMAGANSEGDALSALRRSLRDPGGVLQSWDPTLVNPCTWFHVTCDRDNRVTRLDLGNLNLSGHLVPELGKLDHLQYLELYKNNIQGTIPSELGNLKNLISLDLYKNNISGTIPPTLGKLTSLVFLRLNGNRLTGPIPRELAGISSLKVVDVSSNDLCGTIPTSGPFEHIPLSNFEKNPRLEGPELQGLAVYDTNC</sequence>
<gene>
    <name evidence="3" type="primary">LRR1</name>
    <name evidence="7" type="ordered locus">Os01g0809300</name>
    <name evidence="4" type="ordered locus">LOC_Os01g59440</name>
    <name evidence="8" type="ORF">OSNPB_010809300</name>
    <name evidence="6" type="ORF">P0468B07.21</name>
</gene>
<keyword id="KW-1003">Cell membrane</keyword>
<keyword id="KW-0967">Endosome</keyword>
<keyword id="KW-0433">Leucine-rich repeat</keyword>
<keyword id="KW-0472">Membrane</keyword>
<keyword id="KW-0611">Plant defense</keyword>
<keyword id="KW-1185">Reference proteome</keyword>
<keyword id="KW-0677">Repeat</keyword>
<keyword id="KW-0732">Signal</keyword>
<comment type="function">
    <text evidence="2">Involved in plant defense response.</text>
</comment>
<comment type="subunit">
    <text evidence="2">Interacts with HIR1.</text>
</comment>
<comment type="subcellular location">
    <subcellularLocation>
        <location evidence="2">Early endosome membrane</location>
        <topology evidence="2">Peripheral membrane protein</topology>
    </subcellularLocation>
    <subcellularLocation>
        <location evidence="2">Late endosome membrane</location>
        <topology evidence="2">Peripheral membrane protein</topology>
    </subcellularLocation>
    <subcellularLocation>
        <location evidence="2">Cell membrane</location>
        <topology evidence="2">Peripheral membrane protein</topology>
    </subcellularLocation>
</comment>
<comment type="induction">
    <text evidence="2">Up-regulated by wounding and upon pathogen infection.</text>
</comment>
<protein>
    <recommendedName>
        <fullName evidence="3">Leucine-rich repeat protein 1</fullName>
        <shortName evidence="3">OsLRR1</shortName>
    </recommendedName>
</protein>
<organism evidence="6">
    <name type="scientific">Oryza sativa subsp. japonica</name>
    <name type="common">Rice</name>
    <dbReference type="NCBI Taxonomy" id="39947"/>
    <lineage>
        <taxon>Eukaryota</taxon>
        <taxon>Viridiplantae</taxon>
        <taxon>Streptophyta</taxon>
        <taxon>Embryophyta</taxon>
        <taxon>Tracheophyta</taxon>
        <taxon>Spermatophyta</taxon>
        <taxon>Magnoliopsida</taxon>
        <taxon>Liliopsida</taxon>
        <taxon>Poales</taxon>
        <taxon>Poaceae</taxon>
        <taxon>BOP clade</taxon>
        <taxon>Oryzoideae</taxon>
        <taxon>Oryzeae</taxon>
        <taxon>Oryzinae</taxon>
        <taxon>Oryza</taxon>
        <taxon>Oryza sativa</taxon>
    </lineage>
</organism>
<name>LRR1_ORYSJ</name>